<feature type="initiator methionine" description="Removed" evidence="1">
    <location>
        <position position="1"/>
    </location>
</feature>
<feature type="chain" id="PRO_0000272452" description="Phosphate import ATP-binding protein PstB">
    <location>
        <begin position="2"/>
        <end position="257"/>
    </location>
</feature>
<feature type="domain" description="ABC transporter" evidence="2">
    <location>
        <begin position="11"/>
        <end position="252"/>
    </location>
</feature>
<feature type="binding site" evidence="2">
    <location>
        <begin position="43"/>
        <end position="50"/>
    </location>
    <ligand>
        <name>ATP</name>
        <dbReference type="ChEBI" id="CHEBI:30616"/>
    </ligand>
</feature>
<comment type="function">
    <text evidence="2">Part of the ABC transporter complex PstSACB involved in phosphate import. Responsible for energy coupling to the transport system.</text>
</comment>
<comment type="catalytic activity">
    <reaction evidence="2">
        <text>phosphate(out) + ATP + H2O = ADP + 2 phosphate(in) + H(+)</text>
        <dbReference type="Rhea" id="RHEA:24440"/>
        <dbReference type="ChEBI" id="CHEBI:15377"/>
        <dbReference type="ChEBI" id="CHEBI:15378"/>
        <dbReference type="ChEBI" id="CHEBI:30616"/>
        <dbReference type="ChEBI" id="CHEBI:43474"/>
        <dbReference type="ChEBI" id="CHEBI:456216"/>
        <dbReference type="EC" id="7.3.2.1"/>
    </reaction>
</comment>
<comment type="subunit">
    <text evidence="2">The complex is composed of two ATP-binding proteins (PstB), two transmembrane proteins (PstC and PstA) and a solute-binding protein (PstS).</text>
</comment>
<comment type="subcellular location">
    <subcellularLocation>
        <location evidence="2">Cell inner membrane</location>
        <topology evidence="2">Peripheral membrane protein</topology>
    </subcellularLocation>
</comment>
<comment type="similarity">
    <text evidence="2">Belongs to the ABC transporter superfamily. Phosphate importer (TC 3.A.1.7) family.</text>
</comment>
<evidence type="ECO:0000250" key="1"/>
<evidence type="ECO:0000255" key="2">
    <source>
        <dbReference type="HAMAP-Rule" id="MF_01702"/>
    </source>
</evidence>
<accession>Q1R4L0</accession>
<keyword id="KW-0067">ATP-binding</keyword>
<keyword id="KW-0997">Cell inner membrane</keyword>
<keyword id="KW-1003">Cell membrane</keyword>
<keyword id="KW-0472">Membrane</keyword>
<keyword id="KW-0547">Nucleotide-binding</keyword>
<keyword id="KW-0592">Phosphate transport</keyword>
<keyword id="KW-1278">Translocase</keyword>
<keyword id="KW-0813">Transport</keyword>
<name>PSTB_ECOUT</name>
<gene>
    <name evidence="2" type="primary">pstB</name>
    <name type="ordered locus">UTI89_C4277</name>
</gene>
<sequence>MSMVETAPSKIQVRNLNFYYGKFHALKNINLDIAKNQVTAFIGPSGCGKSTLLRTFNKMFELYPEQRAEGEILLDGDNILTNSQDIALLRAKVGMVFQKPTPFPMSIYDNIAFGVRLFEKLSRADMDERVQWALTKAALWNETKDKLHQSGYSLSGGQQQRLCIARGIAIRPEVLLLDEPCSALDPISTGRIEELITELKQDYTVVIVTHNMQQAARCSDHTAFMYLGELIEFSNTDDLFTKPAKKQTEDYITGRYG</sequence>
<reference key="1">
    <citation type="journal article" date="2006" name="Proc. Natl. Acad. Sci. U.S.A.">
        <title>Identification of genes subject to positive selection in uropathogenic strains of Escherichia coli: a comparative genomics approach.</title>
        <authorList>
            <person name="Chen S.L."/>
            <person name="Hung C.-S."/>
            <person name="Xu J."/>
            <person name="Reigstad C.S."/>
            <person name="Magrini V."/>
            <person name="Sabo A."/>
            <person name="Blasiar D."/>
            <person name="Bieri T."/>
            <person name="Meyer R.R."/>
            <person name="Ozersky P."/>
            <person name="Armstrong J.R."/>
            <person name="Fulton R.S."/>
            <person name="Latreille J.P."/>
            <person name="Spieth J."/>
            <person name="Hooton T.M."/>
            <person name="Mardis E.R."/>
            <person name="Hultgren S.J."/>
            <person name="Gordon J.I."/>
        </authorList>
    </citation>
    <scope>NUCLEOTIDE SEQUENCE [LARGE SCALE GENOMIC DNA]</scope>
    <source>
        <strain>UTI89 / UPEC</strain>
    </source>
</reference>
<protein>
    <recommendedName>
        <fullName evidence="2">Phosphate import ATP-binding protein PstB</fullName>
        <ecNumber evidence="2">7.3.2.1</ecNumber>
    </recommendedName>
    <alternativeName>
        <fullName evidence="2">ABC phosphate transporter</fullName>
    </alternativeName>
    <alternativeName>
        <fullName evidence="2">Phosphate-transporting ATPase</fullName>
    </alternativeName>
</protein>
<organism>
    <name type="scientific">Escherichia coli (strain UTI89 / UPEC)</name>
    <dbReference type="NCBI Taxonomy" id="364106"/>
    <lineage>
        <taxon>Bacteria</taxon>
        <taxon>Pseudomonadati</taxon>
        <taxon>Pseudomonadota</taxon>
        <taxon>Gammaproteobacteria</taxon>
        <taxon>Enterobacterales</taxon>
        <taxon>Enterobacteriaceae</taxon>
        <taxon>Escherichia</taxon>
    </lineage>
</organism>
<dbReference type="EC" id="7.3.2.1" evidence="2"/>
<dbReference type="EMBL" id="CP000243">
    <property type="protein sequence ID" value="ABE09704.1"/>
    <property type="molecule type" value="Genomic_DNA"/>
</dbReference>
<dbReference type="RefSeq" id="WP_000063125.1">
    <property type="nucleotide sequence ID" value="NZ_CP064825.1"/>
</dbReference>
<dbReference type="SMR" id="Q1R4L0"/>
<dbReference type="GeneID" id="93778212"/>
<dbReference type="KEGG" id="eci:UTI89_C4277"/>
<dbReference type="HOGENOM" id="CLU_000604_1_22_6"/>
<dbReference type="Proteomes" id="UP000001952">
    <property type="component" value="Chromosome"/>
</dbReference>
<dbReference type="GO" id="GO:0005886">
    <property type="term" value="C:plasma membrane"/>
    <property type="evidence" value="ECO:0007669"/>
    <property type="project" value="UniProtKB-SubCell"/>
</dbReference>
<dbReference type="GO" id="GO:0005524">
    <property type="term" value="F:ATP binding"/>
    <property type="evidence" value="ECO:0007669"/>
    <property type="project" value="UniProtKB-KW"/>
</dbReference>
<dbReference type="GO" id="GO:0016887">
    <property type="term" value="F:ATP hydrolysis activity"/>
    <property type="evidence" value="ECO:0007669"/>
    <property type="project" value="InterPro"/>
</dbReference>
<dbReference type="GO" id="GO:0015415">
    <property type="term" value="F:ATPase-coupled phosphate ion transmembrane transporter activity"/>
    <property type="evidence" value="ECO:0007669"/>
    <property type="project" value="UniProtKB-EC"/>
</dbReference>
<dbReference type="GO" id="GO:0035435">
    <property type="term" value="P:phosphate ion transmembrane transport"/>
    <property type="evidence" value="ECO:0007669"/>
    <property type="project" value="InterPro"/>
</dbReference>
<dbReference type="CDD" id="cd03260">
    <property type="entry name" value="ABC_PstB_phosphate_transporter"/>
    <property type="match status" value="1"/>
</dbReference>
<dbReference type="FunFam" id="3.40.50.300:FF:000132">
    <property type="entry name" value="Phosphate import ATP-binding protein PstB"/>
    <property type="match status" value="1"/>
</dbReference>
<dbReference type="Gene3D" id="3.40.50.300">
    <property type="entry name" value="P-loop containing nucleotide triphosphate hydrolases"/>
    <property type="match status" value="1"/>
</dbReference>
<dbReference type="InterPro" id="IPR003593">
    <property type="entry name" value="AAA+_ATPase"/>
</dbReference>
<dbReference type="InterPro" id="IPR003439">
    <property type="entry name" value="ABC_transporter-like_ATP-bd"/>
</dbReference>
<dbReference type="InterPro" id="IPR017871">
    <property type="entry name" value="ABC_transporter-like_CS"/>
</dbReference>
<dbReference type="InterPro" id="IPR027417">
    <property type="entry name" value="P-loop_NTPase"/>
</dbReference>
<dbReference type="InterPro" id="IPR005670">
    <property type="entry name" value="PstB-like"/>
</dbReference>
<dbReference type="NCBIfam" id="TIGR00972">
    <property type="entry name" value="3a0107s01c2"/>
    <property type="match status" value="1"/>
</dbReference>
<dbReference type="PANTHER" id="PTHR43423">
    <property type="entry name" value="ABC TRANSPORTER I FAMILY MEMBER 17"/>
    <property type="match status" value="1"/>
</dbReference>
<dbReference type="PANTHER" id="PTHR43423:SF3">
    <property type="entry name" value="PHOSPHATE IMPORT ATP-BINDING PROTEIN PSTB"/>
    <property type="match status" value="1"/>
</dbReference>
<dbReference type="Pfam" id="PF00005">
    <property type="entry name" value="ABC_tran"/>
    <property type="match status" value="1"/>
</dbReference>
<dbReference type="SMART" id="SM00382">
    <property type="entry name" value="AAA"/>
    <property type="match status" value="1"/>
</dbReference>
<dbReference type="SUPFAM" id="SSF52540">
    <property type="entry name" value="P-loop containing nucleoside triphosphate hydrolases"/>
    <property type="match status" value="1"/>
</dbReference>
<dbReference type="PROSITE" id="PS00211">
    <property type="entry name" value="ABC_TRANSPORTER_1"/>
    <property type="match status" value="1"/>
</dbReference>
<dbReference type="PROSITE" id="PS50893">
    <property type="entry name" value="ABC_TRANSPORTER_2"/>
    <property type="match status" value="1"/>
</dbReference>
<dbReference type="PROSITE" id="PS51238">
    <property type="entry name" value="PSTB"/>
    <property type="match status" value="1"/>
</dbReference>
<proteinExistence type="inferred from homology"/>